<comment type="function">
    <text evidence="1">The glycine cleavage system catalyzes the degradation of glycine. The H protein shuttles the methylamine group of glycine from the P protein to the T protein.</text>
</comment>
<comment type="function">
    <text evidence="1">Is also involved in protein lipoylation via its role as an octanoyl/lipoyl carrier protein intermediate.</text>
</comment>
<comment type="cofactor">
    <cofactor evidence="1">
        <name>(R)-lipoate</name>
        <dbReference type="ChEBI" id="CHEBI:83088"/>
    </cofactor>
    <text evidence="1">Binds 1 lipoyl cofactor covalently.</text>
</comment>
<comment type="subunit">
    <text evidence="1">The glycine cleavage system is composed of four proteins: P, T, L and H.</text>
</comment>
<comment type="similarity">
    <text evidence="1">Belongs to the GcvH family.</text>
</comment>
<sequence length="126" mass="14081">MAVPNELKYSKEHEWVKVEGNVATIGITEYAQSELGDIVFVELPETDDEINEGDTFGSVESVKTVSELYAPISGKVVEVNEELEDSPEFVNESPYEKAWMVKVEISDESQLEALLTAEKYSEMIGE</sequence>
<reference key="1">
    <citation type="journal article" date="2004" name="Proc. Natl. Acad. Sci. U.S.A.">
        <title>Complete genomes of two clinical Staphylococcus aureus strains: evidence for the rapid evolution of virulence and drug resistance.</title>
        <authorList>
            <person name="Holden M.T.G."/>
            <person name="Feil E.J."/>
            <person name="Lindsay J.A."/>
            <person name="Peacock S.J."/>
            <person name="Day N.P.J."/>
            <person name="Enright M.C."/>
            <person name="Foster T.J."/>
            <person name="Moore C.E."/>
            <person name="Hurst L."/>
            <person name="Atkin R."/>
            <person name="Barron A."/>
            <person name="Bason N."/>
            <person name="Bentley S.D."/>
            <person name="Chillingworth C."/>
            <person name="Chillingworth T."/>
            <person name="Churcher C."/>
            <person name="Clark L."/>
            <person name="Corton C."/>
            <person name="Cronin A."/>
            <person name="Doggett J."/>
            <person name="Dowd L."/>
            <person name="Feltwell T."/>
            <person name="Hance Z."/>
            <person name="Harris B."/>
            <person name="Hauser H."/>
            <person name="Holroyd S."/>
            <person name="Jagels K."/>
            <person name="James K.D."/>
            <person name="Lennard N."/>
            <person name="Line A."/>
            <person name="Mayes R."/>
            <person name="Moule S."/>
            <person name="Mungall K."/>
            <person name="Ormond D."/>
            <person name="Quail M.A."/>
            <person name="Rabbinowitsch E."/>
            <person name="Rutherford K.M."/>
            <person name="Sanders M."/>
            <person name="Sharp S."/>
            <person name="Simmonds M."/>
            <person name="Stevens K."/>
            <person name="Whitehead S."/>
            <person name="Barrell B.G."/>
            <person name="Spratt B.G."/>
            <person name="Parkhill J."/>
        </authorList>
    </citation>
    <scope>NUCLEOTIDE SEQUENCE [LARGE SCALE GENOMIC DNA]</scope>
    <source>
        <strain>MRSA252</strain>
    </source>
</reference>
<protein>
    <recommendedName>
        <fullName evidence="1">Glycine cleavage system H protein</fullName>
    </recommendedName>
    <alternativeName>
        <fullName evidence="1">Octanoyl/lipoyl carrier protein</fullName>
    </alternativeName>
</protein>
<gene>
    <name evidence="1" type="primary">gcvH</name>
    <name type="ordered locus">SAR0864</name>
</gene>
<keyword id="KW-0450">Lipoyl</keyword>
<feature type="chain" id="PRO_0000166249" description="Glycine cleavage system H protein">
    <location>
        <begin position="1"/>
        <end position="126"/>
    </location>
</feature>
<feature type="domain" description="Lipoyl-binding" evidence="2">
    <location>
        <begin position="22"/>
        <end position="104"/>
    </location>
</feature>
<feature type="modified residue" description="N6-lipoyllysine" evidence="1">
    <location>
        <position position="63"/>
    </location>
</feature>
<proteinExistence type="inferred from homology"/>
<dbReference type="EMBL" id="BX571856">
    <property type="protein sequence ID" value="CAG39873.1"/>
    <property type="molecule type" value="Genomic_DNA"/>
</dbReference>
<dbReference type="RefSeq" id="WP_000290491.1">
    <property type="nucleotide sequence ID" value="NC_002952.2"/>
</dbReference>
<dbReference type="SMR" id="Q6GII3"/>
<dbReference type="KEGG" id="sar:SAR0864"/>
<dbReference type="HOGENOM" id="CLU_097408_2_0_9"/>
<dbReference type="Proteomes" id="UP000000596">
    <property type="component" value="Chromosome"/>
</dbReference>
<dbReference type="GO" id="GO:0005829">
    <property type="term" value="C:cytosol"/>
    <property type="evidence" value="ECO:0007669"/>
    <property type="project" value="TreeGrafter"/>
</dbReference>
<dbReference type="GO" id="GO:0005960">
    <property type="term" value="C:glycine cleavage complex"/>
    <property type="evidence" value="ECO:0007669"/>
    <property type="project" value="InterPro"/>
</dbReference>
<dbReference type="GO" id="GO:0019464">
    <property type="term" value="P:glycine decarboxylation via glycine cleavage system"/>
    <property type="evidence" value="ECO:0007669"/>
    <property type="project" value="UniProtKB-UniRule"/>
</dbReference>
<dbReference type="CDD" id="cd06848">
    <property type="entry name" value="GCS_H"/>
    <property type="match status" value="1"/>
</dbReference>
<dbReference type="Gene3D" id="2.40.50.100">
    <property type="match status" value="1"/>
</dbReference>
<dbReference type="HAMAP" id="MF_00272">
    <property type="entry name" value="GcvH"/>
    <property type="match status" value="1"/>
</dbReference>
<dbReference type="InterPro" id="IPR003016">
    <property type="entry name" value="2-oxoA_DH_lipoyl-BS"/>
</dbReference>
<dbReference type="InterPro" id="IPR000089">
    <property type="entry name" value="Biotin_lipoyl"/>
</dbReference>
<dbReference type="InterPro" id="IPR002930">
    <property type="entry name" value="GCV_H"/>
</dbReference>
<dbReference type="InterPro" id="IPR033753">
    <property type="entry name" value="GCV_H/Fam206"/>
</dbReference>
<dbReference type="InterPro" id="IPR017453">
    <property type="entry name" value="GCV_H_sub"/>
</dbReference>
<dbReference type="InterPro" id="IPR011053">
    <property type="entry name" value="Single_hybrid_motif"/>
</dbReference>
<dbReference type="NCBIfam" id="TIGR00527">
    <property type="entry name" value="gcvH"/>
    <property type="match status" value="1"/>
</dbReference>
<dbReference type="NCBIfam" id="NF002270">
    <property type="entry name" value="PRK01202.1"/>
    <property type="match status" value="1"/>
</dbReference>
<dbReference type="PANTHER" id="PTHR11715">
    <property type="entry name" value="GLYCINE CLEAVAGE SYSTEM H PROTEIN"/>
    <property type="match status" value="1"/>
</dbReference>
<dbReference type="PANTHER" id="PTHR11715:SF3">
    <property type="entry name" value="GLYCINE CLEAVAGE SYSTEM H PROTEIN-RELATED"/>
    <property type="match status" value="1"/>
</dbReference>
<dbReference type="Pfam" id="PF01597">
    <property type="entry name" value="GCV_H"/>
    <property type="match status" value="1"/>
</dbReference>
<dbReference type="SUPFAM" id="SSF51230">
    <property type="entry name" value="Single hybrid motif"/>
    <property type="match status" value="1"/>
</dbReference>
<dbReference type="PROSITE" id="PS50968">
    <property type="entry name" value="BIOTINYL_LIPOYL"/>
    <property type="match status" value="1"/>
</dbReference>
<dbReference type="PROSITE" id="PS00189">
    <property type="entry name" value="LIPOYL"/>
    <property type="match status" value="1"/>
</dbReference>
<evidence type="ECO:0000255" key="1">
    <source>
        <dbReference type="HAMAP-Rule" id="MF_00272"/>
    </source>
</evidence>
<evidence type="ECO:0000255" key="2">
    <source>
        <dbReference type="PROSITE-ProRule" id="PRU01066"/>
    </source>
</evidence>
<organism>
    <name type="scientific">Staphylococcus aureus (strain MRSA252)</name>
    <dbReference type="NCBI Taxonomy" id="282458"/>
    <lineage>
        <taxon>Bacteria</taxon>
        <taxon>Bacillati</taxon>
        <taxon>Bacillota</taxon>
        <taxon>Bacilli</taxon>
        <taxon>Bacillales</taxon>
        <taxon>Staphylococcaceae</taxon>
        <taxon>Staphylococcus</taxon>
    </lineage>
</organism>
<accession>Q6GII3</accession>
<name>GCSH_STAAR</name>